<keyword id="KW-0489">Methyltransferase</keyword>
<keyword id="KW-1185">Reference proteome</keyword>
<keyword id="KW-0949">S-adenosyl-L-methionine</keyword>
<keyword id="KW-0808">Transferase</keyword>
<keyword id="KW-0819">tRNA processing</keyword>
<sequence>MRQHVNPLSRFFQLPRPLPSPEEMFAQSSRPLHLDIGCARGGFLLSLAPLQPEWNHVGVEIRHPLVLSAERDRQELELDNLRFLFCNVNVSLEEWLDALPRDQLQWVSIQFPDPWFKRRHQKRRVLQPSLLIALATALQPGRELFIQSDVLSVIEPMVMLIEQSNCFERPKNDSHAWQKANPLPVPTERERYVLDQGLQVYRRLYQRNDQQAPELSNLEALWQQVDNPSKEEHSDC</sequence>
<proteinExistence type="inferred from homology"/>
<organism>
    <name type="scientific">Prochlorococcus marinus (strain MIT 9313)</name>
    <dbReference type="NCBI Taxonomy" id="74547"/>
    <lineage>
        <taxon>Bacteria</taxon>
        <taxon>Bacillati</taxon>
        <taxon>Cyanobacteriota</taxon>
        <taxon>Cyanophyceae</taxon>
        <taxon>Synechococcales</taxon>
        <taxon>Prochlorococcaceae</taxon>
        <taxon>Prochlorococcus</taxon>
    </lineage>
</organism>
<gene>
    <name evidence="2" type="primary">trmB</name>
    <name type="ordered locus">PMT_1820</name>
</gene>
<accession>Q7V4W7</accession>
<protein>
    <recommendedName>
        <fullName evidence="2">tRNA (guanine-N(7)-)-methyltransferase</fullName>
        <ecNumber evidence="2">2.1.1.33</ecNumber>
    </recommendedName>
    <alternativeName>
        <fullName evidence="2">tRNA (guanine(46)-N(7))-methyltransferase</fullName>
    </alternativeName>
    <alternativeName>
        <fullName evidence="2">tRNA(m7G46)-methyltransferase</fullName>
    </alternativeName>
</protein>
<name>TRMB_PROMM</name>
<feature type="chain" id="PRO_0000171374" description="tRNA (guanine-N(7)-)-methyltransferase">
    <location>
        <begin position="1"/>
        <end position="236"/>
    </location>
</feature>
<feature type="active site" evidence="1">
    <location>
        <position position="113"/>
    </location>
</feature>
<feature type="binding site" evidence="2">
    <location>
        <position position="35"/>
    </location>
    <ligand>
        <name>S-adenosyl-L-methionine</name>
        <dbReference type="ChEBI" id="CHEBI:59789"/>
    </ligand>
</feature>
<feature type="binding site" evidence="2">
    <location>
        <position position="60"/>
    </location>
    <ligand>
        <name>S-adenosyl-L-methionine</name>
        <dbReference type="ChEBI" id="CHEBI:59789"/>
    </ligand>
</feature>
<feature type="binding site" evidence="2">
    <location>
        <position position="87"/>
    </location>
    <ligand>
        <name>S-adenosyl-L-methionine</name>
        <dbReference type="ChEBI" id="CHEBI:59789"/>
    </ligand>
</feature>
<feature type="binding site" evidence="2">
    <location>
        <position position="113"/>
    </location>
    <ligand>
        <name>S-adenosyl-L-methionine</name>
        <dbReference type="ChEBI" id="CHEBI:59789"/>
    </ligand>
</feature>
<feature type="binding site" evidence="2">
    <location>
        <position position="117"/>
    </location>
    <ligand>
        <name>substrate</name>
    </ligand>
</feature>
<feature type="binding site" evidence="2">
    <location>
        <position position="149"/>
    </location>
    <ligand>
        <name>substrate</name>
    </ligand>
</feature>
<dbReference type="EC" id="2.1.1.33" evidence="2"/>
<dbReference type="EMBL" id="BX548175">
    <property type="protein sequence ID" value="CAE21995.1"/>
    <property type="molecule type" value="Genomic_DNA"/>
</dbReference>
<dbReference type="RefSeq" id="WP_011131187.1">
    <property type="nucleotide sequence ID" value="NC_005071.1"/>
</dbReference>
<dbReference type="SMR" id="Q7V4W7"/>
<dbReference type="KEGG" id="pmt:PMT_1820"/>
<dbReference type="eggNOG" id="COG0220">
    <property type="taxonomic scope" value="Bacteria"/>
</dbReference>
<dbReference type="HOGENOM" id="CLU_050910_1_3_3"/>
<dbReference type="OrthoDB" id="9802090at2"/>
<dbReference type="UniPathway" id="UPA00989"/>
<dbReference type="Proteomes" id="UP000001423">
    <property type="component" value="Chromosome"/>
</dbReference>
<dbReference type="GO" id="GO:0043527">
    <property type="term" value="C:tRNA methyltransferase complex"/>
    <property type="evidence" value="ECO:0007669"/>
    <property type="project" value="TreeGrafter"/>
</dbReference>
<dbReference type="GO" id="GO:0008176">
    <property type="term" value="F:tRNA (guanine(46)-N7)-methyltransferase activity"/>
    <property type="evidence" value="ECO:0007669"/>
    <property type="project" value="UniProtKB-UniRule"/>
</dbReference>
<dbReference type="CDD" id="cd02440">
    <property type="entry name" value="AdoMet_MTases"/>
    <property type="match status" value="1"/>
</dbReference>
<dbReference type="Gene3D" id="3.40.50.150">
    <property type="entry name" value="Vaccinia Virus protein VP39"/>
    <property type="match status" value="1"/>
</dbReference>
<dbReference type="HAMAP" id="MF_01057">
    <property type="entry name" value="tRNA_methyltr_TrmB"/>
    <property type="match status" value="1"/>
</dbReference>
<dbReference type="InterPro" id="IPR029063">
    <property type="entry name" value="SAM-dependent_MTases_sf"/>
</dbReference>
<dbReference type="InterPro" id="IPR003358">
    <property type="entry name" value="tRNA_(Gua-N-7)_MeTrfase_Trmb"/>
</dbReference>
<dbReference type="InterPro" id="IPR055361">
    <property type="entry name" value="tRNA_methyltr_TrmB_bact"/>
</dbReference>
<dbReference type="NCBIfam" id="TIGR00091">
    <property type="entry name" value="tRNA (guanosine(46)-N7)-methyltransferase TrmB"/>
    <property type="match status" value="1"/>
</dbReference>
<dbReference type="PANTHER" id="PTHR23417">
    <property type="entry name" value="3-DEOXY-D-MANNO-OCTULOSONIC-ACID TRANSFERASE/TRNA GUANINE-N 7 - -METHYLTRANSFERASE"/>
    <property type="match status" value="1"/>
</dbReference>
<dbReference type="PANTHER" id="PTHR23417:SF21">
    <property type="entry name" value="TRNA (GUANINE-N(7)-)-METHYLTRANSFERASE"/>
    <property type="match status" value="1"/>
</dbReference>
<dbReference type="Pfam" id="PF02390">
    <property type="entry name" value="Methyltransf_4"/>
    <property type="match status" value="1"/>
</dbReference>
<dbReference type="SUPFAM" id="SSF53335">
    <property type="entry name" value="S-adenosyl-L-methionine-dependent methyltransferases"/>
    <property type="match status" value="1"/>
</dbReference>
<dbReference type="PROSITE" id="PS51625">
    <property type="entry name" value="SAM_MT_TRMB"/>
    <property type="match status" value="1"/>
</dbReference>
<reference key="1">
    <citation type="journal article" date="2003" name="Nature">
        <title>Genome divergence in two Prochlorococcus ecotypes reflects oceanic niche differentiation.</title>
        <authorList>
            <person name="Rocap G."/>
            <person name="Larimer F.W."/>
            <person name="Lamerdin J.E."/>
            <person name="Malfatti S."/>
            <person name="Chain P."/>
            <person name="Ahlgren N.A."/>
            <person name="Arellano A."/>
            <person name="Coleman M."/>
            <person name="Hauser L."/>
            <person name="Hess W.R."/>
            <person name="Johnson Z.I."/>
            <person name="Land M.L."/>
            <person name="Lindell D."/>
            <person name="Post A.F."/>
            <person name="Regala W."/>
            <person name="Shah M."/>
            <person name="Shaw S.L."/>
            <person name="Steglich C."/>
            <person name="Sullivan M.B."/>
            <person name="Ting C.S."/>
            <person name="Tolonen A."/>
            <person name="Webb E.A."/>
            <person name="Zinser E.R."/>
            <person name="Chisholm S.W."/>
        </authorList>
    </citation>
    <scope>NUCLEOTIDE SEQUENCE [LARGE SCALE GENOMIC DNA]</scope>
    <source>
        <strain>MIT 9313</strain>
    </source>
</reference>
<evidence type="ECO:0000250" key="1"/>
<evidence type="ECO:0000255" key="2">
    <source>
        <dbReference type="HAMAP-Rule" id="MF_01057"/>
    </source>
</evidence>
<comment type="function">
    <text evidence="2">Catalyzes the formation of N(7)-methylguanine at position 46 (m7G46) in tRNA.</text>
</comment>
<comment type="catalytic activity">
    <reaction evidence="2">
        <text>guanosine(46) in tRNA + S-adenosyl-L-methionine = N(7)-methylguanosine(46) in tRNA + S-adenosyl-L-homocysteine</text>
        <dbReference type="Rhea" id="RHEA:42708"/>
        <dbReference type="Rhea" id="RHEA-COMP:10188"/>
        <dbReference type="Rhea" id="RHEA-COMP:10189"/>
        <dbReference type="ChEBI" id="CHEBI:57856"/>
        <dbReference type="ChEBI" id="CHEBI:59789"/>
        <dbReference type="ChEBI" id="CHEBI:74269"/>
        <dbReference type="ChEBI" id="CHEBI:74480"/>
        <dbReference type="EC" id="2.1.1.33"/>
    </reaction>
</comment>
<comment type="pathway">
    <text evidence="2">tRNA modification; N(7)-methylguanine-tRNA biosynthesis.</text>
</comment>
<comment type="similarity">
    <text evidence="2">Belongs to the class I-like SAM-binding methyltransferase superfamily. TrmB family.</text>
</comment>